<comment type="function">
    <text evidence="2">Catalyzes the dehydration of dTDP-D-glucose to form dTDP-6-deoxy-D-xylo-4-hexulose via a three-step process involving oxidation, dehydration and reduction.</text>
</comment>
<comment type="catalytic activity">
    <reaction evidence="2">
        <text>dTDP-alpha-D-glucose = dTDP-4-dehydro-6-deoxy-alpha-D-glucose + H2O</text>
        <dbReference type="Rhea" id="RHEA:17221"/>
        <dbReference type="ChEBI" id="CHEBI:15377"/>
        <dbReference type="ChEBI" id="CHEBI:57477"/>
        <dbReference type="ChEBI" id="CHEBI:57649"/>
        <dbReference type="EC" id="4.2.1.46"/>
    </reaction>
</comment>
<comment type="cofactor">
    <cofactor evidence="2">
        <name>NAD(+)</name>
        <dbReference type="ChEBI" id="CHEBI:57540"/>
    </cofactor>
    <text evidence="2">Binds 1 NAD(+) per subunit.</text>
</comment>
<comment type="pathway">
    <text evidence="3">Carbohydrate biosynthesis; dTDP-L-rhamnose biosynthesis.</text>
</comment>
<comment type="pathway">
    <text evidence="3">Bacterial outer membrane biogenesis; LPS O-antigen biosynthesis.</text>
</comment>
<comment type="subunit">
    <text evidence="2">Homodimer.</text>
</comment>
<comment type="similarity">
    <text evidence="2">Belongs to the NAD(P)-dependent epimerase/dehydratase family. dTDP-glucose dehydratase subfamily.</text>
</comment>
<dbReference type="EC" id="4.2.1.46" evidence="2"/>
<dbReference type="EMBL" id="AF204145">
    <property type="protein sequence ID" value="AAK53466.1"/>
    <property type="molecule type" value="Genomic_DNA"/>
</dbReference>
<dbReference type="EMBL" id="AM920689">
    <property type="protein sequence ID" value="CAP53101.1"/>
    <property type="molecule type" value="Genomic_DNA"/>
</dbReference>
<dbReference type="SMR" id="B0RVL0"/>
<dbReference type="KEGG" id="xca:xcc-b100_3734"/>
<dbReference type="HOGENOM" id="CLU_007383_1_14_6"/>
<dbReference type="UniPathway" id="UPA00124"/>
<dbReference type="UniPathway" id="UPA00281"/>
<dbReference type="Proteomes" id="UP000001188">
    <property type="component" value="Chromosome"/>
</dbReference>
<dbReference type="GO" id="GO:0008460">
    <property type="term" value="F:dTDP-glucose 4,6-dehydratase activity"/>
    <property type="evidence" value="ECO:0000250"/>
    <property type="project" value="UniProtKB"/>
</dbReference>
<dbReference type="GO" id="GO:0019305">
    <property type="term" value="P:dTDP-rhamnose biosynthetic process"/>
    <property type="evidence" value="ECO:0007669"/>
    <property type="project" value="UniProtKB-UniPathway"/>
</dbReference>
<dbReference type="GO" id="GO:0009103">
    <property type="term" value="P:lipopolysaccharide biosynthetic process"/>
    <property type="evidence" value="ECO:0000250"/>
    <property type="project" value="UniProtKB"/>
</dbReference>
<dbReference type="GO" id="GO:0009243">
    <property type="term" value="P:O antigen biosynthetic process"/>
    <property type="evidence" value="ECO:0007669"/>
    <property type="project" value="UniProtKB-UniPathway"/>
</dbReference>
<dbReference type="GO" id="GO:0000271">
    <property type="term" value="P:polysaccharide biosynthetic process"/>
    <property type="evidence" value="ECO:0000250"/>
    <property type="project" value="UniProtKB"/>
</dbReference>
<dbReference type="CDD" id="cd05246">
    <property type="entry name" value="dTDP_GD_SDR_e"/>
    <property type="match status" value="1"/>
</dbReference>
<dbReference type="Gene3D" id="3.40.50.720">
    <property type="entry name" value="NAD(P)-binding Rossmann-like Domain"/>
    <property type="match status" value="1"/>
</dbReference>
<dbReference type="Gene3D" id="3.90.25.10">
    <property type="entry name" value="UDP-galactose 4-epimerase, domain 1"/>
    <property type="match status" value="1"/>
</dbReference>
<dbReference type="InterPro" id="IPR005888">
    <property type="entry name" value="dTDP_Gluc_deHydtase"/>
</dbReference>
<dbReference type="InterPro" id="IPR016040">
    <property type="entry name" value="NAD(P)-bd_dom"/>
</dbReference>
<dbReference type="InterPro" id="IPR036291">
    <property type="entry name" value="NAD(P)-bd_dom_sf"/>
</dbReference>
<dbReference type="NCBIfam" id="TIGR01181">
    <property type="entry name" value="dTDP_gluc_dehyt"/>
    <property type="match status" value="1"/>
</dbReference>
<dbReference type="PANTHER" id="PTHR43000">
    <property type="entry name" value="DTDP-D-GLUCOSE 4,6-DEHYDRATASE-RELATED"/>
    <property type="match status" value="1"/>
</dbReference>
<dbReference type="Pfam" id="PF16363">
    <property type="entry name" value="GDP_Man_Dehyd"/>
    <property type="match status" value="1"/>
</dbReference>
<dbReference type="SUPFAM" id="SSF51735">
    <property type="entry name" value="NAD(P)-binding Rossmann-fold domains"/>
    <property type="match status" value="1"/>
</dbReference>
<sequence length="351" mass="38558">MATWLVTGGAGFIGGNFVLEAVSRGIRVVNLDALTYAGNLNTLASLEGNADHIFVKGDIGDGALVTRLLQEHQPDAVLNFAAESHVDRSIEGPGAFIQTNVVGTLALLEAVRDYWKALPDTRRDAFRFLHVSTDEVYGTLGETGKFTETTPYAPNSPYSASKAASDHLVRAFHHTYGLPVLTTNCSNNYGPYHFPEKLIPLVIAKALAGEPLPVYGDGKQVRDWLFVSDHCEAIRTVLAKGRVGETYNVGGNSERQNIEVVQAICALLDQHRPREDGKPRESQIAYVTDRPGHDRRYAIDASKLKDELGWEPAYTFEQGIALTVDWYLTNQTWVQGVLDGSYRLERIGATV</sequence>
<proteinExistence type="inferred from homology"/>
<accession>B0RVL0</accession>
<accession>P55295</accession>
<name>RMLB_XANCB</name>
<evidence type="ECO:0000250" key="1">
    <source>
        <dbReference type="UniProtKB" id="P26391"/>
    </source>
</evidence>
<evidence type="ECO:0000250" key="2">
    <source>
        <dbReference type="UniProtKB" id="P27830"/>
    </source>
</evidence>
<evidence type="ECO:0000250" key="3">
    <source>
        <dbReference type="UniProtKB" id="P37759"/>
    </source>
</evidence>
<reference key="1">
    <citation type="journal article" date="1993" name="J. Bacteriol.">
        <title>A 3.9-kb DNA region of Xanthomonas campestris pv. campestris that is necessary for lipopolysaccharide production encodes a set of enzymes involved in the synthesis of dTDP-rhamnose.</title>
        <authorList>
            <person name="Koeplin R."/>
            <person name="Wang G."/>
            <person name="Hoette B."/>
            <person name="Priefer U.B."/>
            <person name="Puehler A."/>
        </authorList>
    </citation>
    <scope>NUCLEOTIDE SEQUENCE [GENOMIC DNA]</scope>
</reference>
<reference key="2">
    <citation type="submission" date="1999-10" db="EMBL/GenBank/DDBJ databases">
        <authorList>
            <person name="Vorholter F.J."/>
            <person name="Niehaus K."/>
            <person name="Puehler A."/>
        </authorList>
    </citation>
    <scope>SEQUENCE REVISION TO 8 AND 15</scope>
</reference>
<reference key="3">
    <citation type="journal article" date="2008" name="J. Biotechnol.">
        <title>The genome of Xanthomonas campestris pv. campestris B100 and its use for the reconstruction of metabolic pathways involved in xanthan biosynthesis.</title>
        <authorList>
            <person name="Vorhoelter F.-J."/>
            <person name="Schneiker S."/>
            <person name="Goesmann A."/>
            <person name="Krause L."/>
            <person name="Bekel T."/>
            <person name="Kaiser O."/>
            <person name="Linke B."/>
            <person name="Patschkowski T."/>
            <person name="Rueckert C."/>
            <person name="Schmid J."/>
            <person name="Sidhu V.K."/>
            <person name="Sieber V."/>
            <person name="Tauch A."/>
            <person name="Watt S.A."/>
            <person name="Weisshaar B."/>
            <person name="Becker A."/>
            <person name="Niehaus K."/>
            <person name="Puehler A."/>
        </authorList>
    </citation>
    <scope>NUCLEOTIDE SEQUENCE [LARGE SCALE GENOMIC DNA]</scope>
    <source>
        <strain>B100</strain>
    </source>
</reference>
<protein>
    <recommendedName>
        <fullName evidence="2">dTDP-glucose 4,6-dehydratase</fullName>
        <ecNumber evidence="2">4.2.1.46</ecNumber>
    </recommendedName>
</protein>
<keyword id="KW-0448">Lipopolysaccharide biosynthesis</keyword>
<keyword id="KW-0456">Lyase</keyword>
<keyword id="KW-0520">NAD</keyword>
<feature type="chain" id="PRO_0000333184" description="dTDP-glucose 4,6-dehydratase">
    <location>
        <begin position="1"/>
        <end position="351"/>
    </location>
</feature>
<feature type="active site" description="Proton donor" evidence="2">
    <location>
        <position position="134"/>
    </location>
</feature>
<feature type="active site" description="Proton acceptor" evidence="2">
    <location>
        <position position="135"/>
    </location>
</feature>
<feature type="active site" description="Proton acceptor" evidence="2">
    <location>
        <position position="158"/>
    </location>
</feature>
<feature type="binding site" evidence="2">
    <location>
        <begin position="12"/>
        <end position="13"/>
    </location>
    <ligand>
        <name>NAD(+)</name>
        <dbReference type="ChEBI" id="CHEBI:57540"/>
    </ligand>
</feature>
<feature type="binding site" evidence="2">
    <location>
        <begin position="32"/>
        <end position="35"/>
    </location>
    <ligand>
        <name>NAD(+)</name>
        <dbReference type="ChEBI" id="CHEBI:57540"/>
    </ligand>
</feature>
<feature type="binding site" evidence="2">
    <location>
        <begin position="58"/>
        <end position="59"/>
    </location>
    <ligand>
        <name>NAD(+)</name>
        <dbReference type="ChEBI" id="CHEBI:57540"/>
    </ligand>
</feature>
<feature type="binding site" evidence="2">
    <location>
        <begin position="80"/>
        <end position="84"/>
    </location>
    <ligand>
        <name>NAD(+)</name>
        <dbReference type="ChEBI" id="CHEBI:57540"/>
    </ligand>
</feature>
<feature type="binding site" evidence="1">
    <location>
        <position position="84"/>
    </location>
    <ligand>
        <name>substrate</name>
    </ligand>
</feature>
<feature type="binding site" evidence="2">
    <location>
        <position position="99"/>
    </location>
    <ligand>
        <name>NAD(+)</name>
        <dbReference type="ChEBI" id="CHEBI:57540"/>
    </ligand>
</feature>
<feature type="binding site" evidence="1">
    <location>
        <position position="133"/>
    </location>
    <ligand>
        <name>substrate</name>
    </ligand>
</feature>
<feature type="binding site" evidence="2">
    <location>
        <begin position="158"/>
        <end position="162"/>
    </location>
    <ligand>
        <name>NAD(+)</name>
        <dbReference type="ChEBI" id="CHEBI:57540"/>
    </ligand>
</feature>
<feature type="binding site" evidence="1">
    <location>
        <position position="187"/>
    </location>
    <ligand>
        <name>substrate</name>
    </ligand>
</feature>
<feature type="binding site" evidence="2">
    <location>
        <position position="188"/>
    </location>
    <ligand>
        <name>NAD(+)</name>
        <dbReference type="ChEBI" id="CHEBI:57540"/>
    </ligand>
</feature>
<feature type="binding site" evidence="1">
    <location>
        <begin position="197"/>
        <end position="198"/>
    </location>
    <ligand>
        <name>substrate</name>
    </ligand>
</feature>
<feature type="binding site" evidence="1">
    <location>
        <begin position="213"/>
        <end position="215"/>
    </location>
    <ligand>
        <name>substrate</name>
    </ligand>
</feature>
<feature type="binding site" evidence="1">
    <location>
        <position position="222"/>
    </location>
    <ligand>
        <name>substrate</name>
    </ligand>
</feature>
<feature type="binding site" evidence="1">
    <location>
        <position position="257"/>
    </location>
    <ligand>
        <name>substrate</name>
    </ligand>
</feature>
<feature type="binding site" evidence="1">
    <location>
        <begin position="289"/>
        <end position="293"/>
    </location>
    <ligand>
        <name>substrate</name>
    </ligand>
</feature>
<gene>
    <name type="primary">rfbB</name>
    <name type="synonym">rmlB</name>
    <name type="ordered locus">xcc-b100_3734</name>
</gene>
<organism>
    <name type="scientific">Xanthomonas campestris pv. campestris (strain B100)</name>
    <dbReference type="NCBI Taxonomy" id="509169"/>
    <lineage>
        <taxon>Bacteria</taxon>
        <taxon>Pseudomonadati</taxon>
        <taxon>Pseudomonadota</taxon>
        <taxon>Gammaproteobacteria</taxon>
        <taxon>Lysobacterales</taxon>
        <taxon>Lysobacteraceae</taxon>
        <taxon>Xanthomonas</taxon>
    </lineage>
</organism>